<feature type="chain" id="PRO_1000085780" description="HTH-type transcriptional regulator MalT">
    <location>
        <begin position="1"/>
        <end position="901"/>
    </location>
</feature>
<feature type="domain" description="HTH luxR-type" evidence="1">
    <location>
        <begin position="829"/>
        <end position="894"/>
    </location>
</feature>
<feature type="DNA-binding region" description="H-T-H motif" evidence="1">
    <location>
        <begin position="853"/>
        <end position="872"/>
    </location>
</feature>
<feature type="binding site" evidence="1">
    <location>
        <begin position="39"/>
        <end position="46"/>
    </location>
    <ligand>
        <name>ATP</name>
        <dbReference type="ChEBI" id="CHEBI:30616"/>
    </ligand>
</feature>
<comment type="function">
    <text evidence="1">Positively regulates the transcription of the maltose regulon whose gene products are responsible for uptake and catabolism of malto-oligosaccharides. Specifically binds to the promoter region of its target genes, recognizing a short DNA motif called the MalT box.</text>
</comment>
<comment type="activity regulation">
    <text evidence="1">Activated by ATP and maltotriose, which are both required for DNA binding.</text>
</comment>
<comment type="subunit">
    <text evidence="1">Monomer in solution. Oligomerizes to an active state in the presence of the positive effectors ATP and maltotriose.</text>
</comment>
<comment type="similarity">
    <text evidence="1">Belongs to the MalT family.</text>
</comment>
<proteinExistence type="inferred from homology"/>
<accession>Q0SZP7</accession>
<protein>
    <recommendedName>
        <fullName evidence="1">HTH-type transcriptional regulator MalT</fullName>
    </recommendedName>
    <alternativeName>
        <fullName evidence="1">ATP-dependent transcriptional activator MalT</fullName>
    </alternativeName>
</protein>
<dbReference type="EMBL" id="CP000266">
    <property type="protein sequence ID" value="ABF05468.1"/>
    <property type="molecule type" value="Genomic_DNA"/>
</dbReference>
<dbReference type="RefSeq" id="WP_000907013.1">
    <property type="nucleotide sequence ID" value="NC_008258.1"/>
</dbReference>
<dbReference type="SMR" id="Q0SZP7"/>
<dbReference type="KEGG" id="sfv:SFV_3426"/>
<dbReference type="HOGENOM" id="CLU_006325_3_0_6"/>
<dbReference type="Proteomes" id="UP000000659">
    <property type="component" value="Chromosome"/>
</dbReference>
<dbReference type="GO" id="GO:0005524">
    <property type="term" value="F:ATP binding"/>
    <property type="evidence" value="ECO:0007669"/>
    <property type="project" value="UniProtKB-UniRule"/>
</dbReference>
<dbReference type="GO" id="GO:0003677">
    <property type="term" value="F:DNA binding"/>
    <property type="evidence" value="ECO:0007669"/>
    <property type="project" value="UniProtKB-KW"/>
</dbReference>
<dbReference type="GO" id="GO:0003700">
    <property type="term" value="F:DNA-binding transcription factor activity"/>
    <property type="evidence" value="ECO:0007669"/>
    <property type="project" value="UniProtKB-UniRule"/>
</dbReference>
<dbReference type="GO" id="GO:0045913">
    <property type="term" value="P:positive regulation of carbohydrate metabolic process"/>
    <property type="evidence" value="ECO:0007669"/>
    <property type="project" value="UniProtKB-UniRule"/>
</dbReference>
<dbReference type="GO" id="GO:0045893">
    <property type="term" value="P:positive regulation of DNA-templated transcription"/>
    <property type="evidence" value="ECO:0007669"/>
    <property type="project" value="UniProtKB-UniRule"/>
</dbReference>
<dbReference type="CDD" id="cd06170">
    <property type="entry name" value="LuxR_C_like"/>
    <property type="match status" value="1"/>
</dbReference>
<dbReference type="FunFam" id="1.10.10.10:FF:000115">
    <property type="entry name" value="HTH-type transcriptional regulator MalT"/>
    <property type="match status" value="1"/>
</dbReference>
<dbReference type="Gene3D" id="3.40.50.300">
    <property type="entry name" value="P-loop containing nucleotide triphosphate hydrolases"/>
    <property type="match status" value="1"/>
</dbReference>
<dbReference type="Gene3D" id="1.25.40.10">
    <property type="entry name" value="Tetratricopeptide repeat domain"/>
    <property type="match status" value="1"/>
</dbReference>
<dbReference type="Gene3D" id="1.10.10.10">
    <property type="entry name" value="Winged helix-like DNA-binding domain superfamily/Winged helix DNA-binding domain"/>
    <property type="match status" value="1"/>
</dbReference>
<dbReference type="HAMAP" id="MF_01247">
    <property type="entry name" value="HTH_type_MalT"/>
    <property type="match status" value="1"/>
</dbReference>
<dbReference type="InterPro" id="IPR027417">
    <property type="entry name" value="P-loop_NTPase"/>
</dbReference>
<dbReference type="InterPro" id="IPR016032">
    <property type="entry name" value="Sig_transdc_resp-reg_C-effctor"/>
</dbReference>
<dbReference type="InterPro" id="IPR011990">
    <property type="entry name" value="TPR-like_helical_dom_sf"/>
</dbReference>
<dbReference type="InterPro" id="IPR041617">
    <property type="entry name" value="TPR_MalT"/>
</dbReference>
<dbReference type="InterPro" id="IPR023768">
    <property type="entry name" value="Tscrpt_reg_HTH_MalT"/>
</dbReference>
<dbReference type="InterPro" id="IPR000792">
    <property type="entry name" value="Tscrpt_reg_LuxR_C"/>
</dbReference>
<dbReference type="InterPro" id="IPR036388">
    <property type="entry name" value="WH-like_DNA-bd_sf"/>
</dbReference>
<dbReference type="NCBIfam" id="NF003420">
    <property type="entry name" value="PRK04841.1"/>
    <property type="match status" value="1"/>
</dbReference>
<dbReference type="PANTHER" id="PTHR44688">
    <property type="entry name" value="DNA-BINDING TRANSCRIPTIONAL ACTIVATOR DEVR_DOSR"/>
    <property type="match status" value="1"/>
</dbReference>
<dbReference type="PANTHER" id="PTHR44688:SF16">
    <property type="entry name" value="DNA-BINDING TRANSCRIPTIONAL ACTIVATOR DEVR_DOSR"/>
    <property type="match status" value="1"/>
</dbReference>
<dbReference type="Pfam" id="PF00196">
    <property type="entry name" value="GerE"/>
    <property type="match status" value="1"/>
</dbReference>
<dbReference type="Pfam" id="PF17874">
    <property type="entry name" value="TPR_MalT"/>
    <property type="match status" value="1"/>
</dbReference>
<dbReference type="PRINTS" id="PR00038">
    <property type="entry name" value="HTHLUXR"/>
</dbReference>
<dbReference type="SMART" id="SM00421">
    <property type="entry name" value="HTH_LUXR"/>
    <property type="match status" value="1"/>
</dbReference>
<dbReference type="SUPFAM" id="SSF46894">
    <property type="entry name" value="C-terminal effector domain of the bipartite response regulators"/>
    <property type="match status" value="1"/>
</dbReference>
<dbReference type="SUPFAM" id="SSF52540">
    <property type="entry name" value="P-loop containing nucleoside triphosphate hydrolases"/>
    <property type="match status" value="1"/>
</dbReference>
<dbReference type="SUPFAM" id="SSF48452">
    <property type="entry name" value="TPR-like"/>
    <property type="match status" value="1"/>
</dbReference>
<dbReference type="PROSITE" id="PS00622">
    <property type="entry name" value="HTH_LUXR_1"/>
    <property type="match status" value="1"/>
</dbReference>
<dbReference type="PROSITE" id="PS50043">
    <property type="entry name" value="HTH_LUXR_2"/>
    <property type="match status" value="1"/>
</dbReference>
<reference key="1">
    <citation type="journal article" date="2006" name="BMC Genomics">
        <title>Complete genome sequence of Shigella flexneri 5b and comparison with Shigella flexneri 2a.</title>
        <authorList>
            <person name="Nie H."/>
            <person name="Yang F."/>
            <person name="Zhang X."/>
            <person name="Yang J."/>
            <person name="Chen L."/>
            <person name="Wang J."/>
            <person name="Xiong Z."/>
            <person name="Peng J."/>
            <person name="Sun L."/>
            <person name="Dong J."/>
            <person name="Xue Y."/>
            <person name="Xu X."/>
            <person name="Chen S."/>
            <person name="Yao Z."/>
            <person name="Shen Y."/>
            <person name="Jin Q."/>
        </authorList>
    </citation>
    <scope>NUCLEOTIDE SEQUENCE [LARGE SCALE GENOMIC DNA]</scope>
    <source>
        <strain>8401</strain>
    </source>
</reference>
<keyword id="KW-0010">Activator</keyword>
<keyword id="KW-0067">ATP-binding</keyword>
<keyword id="KW-0119">Carbohydrate metabolism</keyword>
<keyword id="KW-0238">DNA-binding</keyword>
<keyword id="KW-0547">Nucleotide-binding</keyword>
<keyword id="KW-0804">Transcription</keyword>
<keyword id="KW-0805">Transcription regulation</keyword>
<gene>
    <name evidence="1" type="primary">malT</name>
    <name type="ordered locus">SFV_3426</name>
</gene>
<evidence type="ECO:0000255" key="1">
    <source>
        <dbReference type="HAMAP-Rule" id="MF_01247"/>
    </source>
</evidence>
<organism>
    <name type="scientific">Shigella flexneri serotype 5b (strain 8401)</name>
    <dbReference type="NCBI Taxonomy" id="373384"/>
    <lineage>
        <taxon>Bacteria</taxon>
        <taxon>Pseudomonadati</taxon>
        <taxon>Pseudomonadota</taxon>
        <taxon>Gammaproteobacteria</taxon>
        <taxon>Enterobacterales</taxon>
        <taxon>Enterobacteriaceae</taxon>
        <taxon>Shigella</taxon>
    </lineage>
</organism>
<sequence length="901" mass="103103">MLIPSKLSRPVRLDHTVVRERLLAKLSGANNFRLALITSPAGYGKTTLISQWAAGKNDIGWYSLDEGNNQQERFASYLIAAVQQATNGHCAICETMEQKRQYASLTSLFAQLFIELAEWHSPLYLVIDDYHLITNPVIHESMRFFIRHQPENLTLVVLSRNLPQLGIANLRVRDQLLEIGSQKLAFTHQEAKQFFDCRLSSPIEAAESSRICDDVSGWATALQLIALSARQNTHSAHKSARRLAGINASHLSDYLVDEVLDNVDLATRHFLLKSAILRSMNDALITRVTGEENGQMRLEEIERQGLFLQRMDDTGEWFCYHPLFGNFLRQRCQWELAAELPEIHRAAAESWMAQGFPSEAIHHALAAGDALMLRDILLNHAWSLFNHSELSLLEESLKALPWDSLLENPQLVLLQAWLMQSQHRYGEVNTLLARAEHEIKDIREGTMHAEFNALRAQVAINDGNQDEAERLAKLALEELPPGWFYSRIVATSVLGEVLHCKGELTRSLALVQQTEQMARQHDVWHYALWSLIQQSEILFAQGFLQTAWETQEKAFQLINEQHLEQLPMHEFLVRIRAQLLWTWARLDEAEASARSGIEVLSSYQPQQQLQCLAMLIQCSLARGDLDNARSQLNRLENLLGNGKYHSDWISNANKVRVIYWQMTGDKAAAANWLRHTAKPEFANNHFLQGQWRNIARAQILLGEFEPAEIVLEELNENARSLRLMSDLNRNLLLLNQLYWQAGRKSDAQRVLLDALKLANRTGFISHFVIEGEAMAQQLRQLIQLNTLPELEQHRAQRILREINQHHRHKFAHFDENFVERLLNHPEVPELIRTSPLTQREWQVLGLIYSGYSNEQIAGELEVAATTIKTHIRNLYQKLGVAHRQAAVQHAQKLLKMMGYGV</sequence>
<name>MALT_SHIF8</name>